<name>YRF12_YEAST</name>
<proteinExistence type="evidence at transcript level"/>
<dbReference type="EC" id="5.6.2.-" evidence="5"/>
<dbReference type="EMBL" id="U34775">
    <property type="protein sequence ID" value="AAB65037.1"/>
    <property type="molecule type" value="Genomic_DNA"/>
</dbReference>
<dbReference type="EMBL" id="U18922">
    <property type="protein sequence ID" value="AAB64717.1"/>
    <property type="molecule type" value="Genomic_DNA"/>
</dbReference>
<dbReference type="EMBL" id="BK006939">
    <property type="protein sequence ID" value="DAA07853.1"/>
    <property type="molecule type" value="Genomic_DNA"/>
</dbReference>
<dbReference type="PIR" id="S59693">
    <property type="entry name" value="S59693"/>
</dbReference>
<dbReference type="RefSeq" id="NP_011117.3">
    <property type="nucleotide sequence ID" value="NM_001179080.3"/>
</dbReference>
<dbReference type="SMR" id="P40105"/>
<dbReference type="BioGRID" id="36943">
    <property type="interactions" value="13"/>
</dbReference>
<dbReference type="FunCoup" id="P40105">
    <property type="interactions" value="100"/>
</dbReference>
<dbReference type="STRING" id="4932.YER190W"/>
<dbReference type="PaxDb" id="4932-YER190W"/>
<dbReference type="PeptideAtlas" id="P40105"/>
<dbReference type="EnsemblFungi" id="YER190W_mRNA">
    <property type="protein sequence ID" value="YER190W"/>
    <property type="gene ID" value="YER190W"/>
</dbReference>
<dbReference type="GeneID" id="856940"/>
<dbReference type="KEGG" id="sce:YER190W"/>
<dbReference type="AGR" id="SGD:S000000992"/>
<dbReference type="SGD" id="S000000992">
    <property type="gene designation" value="YRF1-2"/>
</dbReference>
<dbReference type="VEuPathDB" id="FungiDB:YER190W"/>
<dbReference type="eggNOG" id="ENOG502QWCT">
    <property type="taxonomic scope" value="Eukaryota"/>
</dbReference>
<dbReference type="GeneTree" id="ENSGT00940000153173"/>
<dbReference type="HOGENOM" id="CLU_003044_2_0_1"/>
<dbReference type="InParanoid" id="P40105"/>
<dbReference type="OrthoDB" id="4070089at2759"/>
<dbReference type="BioCyc" id="YEAST:G3O-30345-MONOMER"/>
<dbReference type="Reactome" id="R-SCE-5689880">
    <property type="pathway name" value="Ub-specific processing proteases"/>
</dbReference>
<dbReference type="Reactome" id="R-SCE-936440">
    <property type="pathway name" value="Negative regulators of DDX58/IFIH1 signaling"/>
</dbReference>
<dbReference type="PRO" id="PR:P40105"/>
<dbReference type="Proteomes" id="UP000002311">
    <property type="component" value="Chromosome V"/>
</dbReference>
<dbReference type="RNAct" id="P40105">
    <property type="molecule type" value="protein"/>
</dbReference>
<dbReference type="GO" id="GO:0005737">
    <property type="term" value="C:cytoplasm"/>
    <property type="evidence" value="ECO:0000318"/>
    <property type="project" value="GO_Central"/>
</dbReference>
<dbReference type="GO" id="GO:0005634">
    <property type="term" value="C:nucleus"/>
    <property type="evidence" value="ECO:0000305"/>
    <property type="project" value="SGD"/>
</dbReference>
<dbReference type="GO" id="GO:0005524">
    <property type="term" value="F:ATP binding"/>
    <property type="evidence" value="ECO:0007669"/>
    <property type="project" value="UniProtKB-KW"/>
</dbReference>
<dbReference type="GO" id="GO:0016887">
    <property type="term" value="F:ATP hydrolysis activity"/>
    <property type="evidence" value="ECO:0007669"/>
    <property type="project" value="RHEA"/>
</dbReference>
<dbReference type="GO" id="GO:0003678">
    <property type="term" value="F:DNA helicase activity"/>
    <property type="evidence" value="ECO:0000314"/>
    <property type="project" value="SGD"/>
</dbReference>
<dbReference type="GO" id="GO:0003676">
    <property type="term" value="F:nucleic acid binding"/>
    <property type="evidence" value="ECO:0007669"/>
    <property type="project" value="InterPro"/>
</dbReference>
<dbReference type="GO" id="GO:0000722">
    <property type="term" value="P:telomere maintenance via recombination"/>
    <property type="evidence" value="ECO:0000316"/>
    <property type="project" value="SGD"/>
</dbReference>
<dbReference type="FunFam" id="3.40.50.300:FF:001914">
    <property type="entry name" value="YML133C-like protein"/>
    <property type="match status" value="1"/>
</dbReference>
<dbReference type="FunFam" id="3.40.50.300:FF:002410">
    <property type="entry name" value="YML133C-like protein"/>
    <property type="match status" value="1"/>
</dbReference>
<dbReference type="Gene3D" id="3.40.50.300">
    <property type="entry name" value="P-loop containing nucleotide triphosphate hydrolases"/>
    <property type="match status" value="1"/>
</dbReference>
<dbReference type="InterPro" id="IPR011545">
    <property type="entry name" value="DEAD/DEAH_box_helicase_dom"/>
</dbReference>
<dbReference type="InterPro" id="IPR014001">
    <property type="entry name" value="Helicase_ATP-bd"/>
</dbReference>
<dbReference type="InterPro" id="IPR001650">
    <property type="entry name" value="Helicase_C-like"/>
</dbReference>
<dbReference type="InterPro" id="IPR027417">
    <property type="entry name" value="P-loop_NTPase"/>
</dbReference>
<dbReference type="InterPro" id="IPR050978">
    <property type="entry name" value="Y'_ATP-dependent_helicase"/>
</dbReference>
<dbReference type="PANTHER" id="PTHR31583">
    <property type="match status" value="1"/>
</dbReference>
<dbReference type="PANTHER" id="PTHR31583:SF2">
    <property type="match status" value="1"/>
</dbReference>
<dbReference type="Pfam" id="PF00270">
    <property type="entry name" value="DEAD"/>
    <property type="match status" value="1"/>
</dbReference>
<dbReference type="Pfam" id="PF00271">
    <property type="entry name" value="Helicase_C"/>
    <property type="match status" value="1"/>
</dbReference>
<dbReference type="SMART" id="SM00487">
    <property type="entry name" value="DEXDc"/>
    <property type="match status" value="1"/>
</dbReference>
<dbReference type="SMART" id="SM00490">
    <property type="entry name" value="HELICc"/>
    <property type="match status" value="1"/>
</dbReference>
<dbReference type="SUPFAM" id="SSF52540">
    <property type="entry name" value="P-loop containing nucleoside triphosphate hydrolases"/>
    <property type="match status" value="1"/>
</dbReference>
<dbReference type="PROSITE" id="PS51192">
    <property type="entry name" value="HELICASE_ATP_BIND_1"/>
    <property type="match status" value="1"/>
</dbReference>
<dbReference type="PROSITE" id="PS51194">
    <property type="entry name" value="HELICASE_CTER"/>
    <property type="match status" value="1"/>
</dbReference>
<gene>
    <name type="primary">YRF1-2</name>
    <name type="ordered locus">YER190W</name>
</gene>
<protein>
    <recommendedName>
        <fullName>Y' element ATP-dependent helicase protein 1 copy 2</fullName>
        <ecNumber evidence="5">5.6.2.-</ecNumber>
    </recommendedName>
</protein>
<evidence type="ECO:0000255" key="1">
    <source>
        <dbReference type="PROSITE-ProRule" id="PRU00541"/>
    </source>
</evidence>
<evidence type="ECO:0000255" key="2">
    <source>
        <dbReference type="PROSITE-ProRule" id="PRU00542"/>
    </source>
</evidence>
<evidence type="ECO:0000256" key="3">
    <source>
        <dbReference type="SAM" id="MobiDB-lite"/>
    </source>
</evidence>
<evidence type="ECO:0000305" key="4"/>
<evidence type="ECO:0000305" key="5">
    <source>
    </source>
</evidence>
<feature type="chain" id="PRO_0000102202" description="Y' element ATP-dependent helicase protein 1 copy 2">
    <location>
        <begin position="1"/>
        <end position="1681"/>
    </location>
</feature>
<feature type="domain" description="Helicase ATP-binding" evidence="1">
    <location>
        <begin position="683"/>
        <end position="860"/>
    </location>
</feature>
<feature type="domain" description="Helicase C-terminal" evidence="2">
    <location>
        <begin position="917"/>
        <end position="1066"/>
    </location>
</feature>
<feature type="region of interest" description="Disordered" evidence="3">
    <location>
        <begin position="1140"/>
        <end position="1307"/>
    </location>
</feature>
<feature type="compositionally biased region" description="Low complexity" evidence="3">
    <location>
        <begin position="1140"/>
        <end position="1283"/>
    </location>
</feature>
<feature type="compositionally biased region" description="Basic and acidic residues" evidence="3">
    <location>
        <begin position="1284"/>
        <end position="1307"/>
    </location>
</feature>
<feature type="binding site" evidence="1">
    <location>
        <begin position="696"/>
        <end position="703"/>
    </location>
    <ligand>
        <name>ATP</name>
        <dbReference type="ChEBI" id="CHEBI:30616"/>
    </ligand>
</feature>
<keyword id="KW-0067">ATP-binding</keyword>
<keyword id="KW-0347">Helicase</keyword>
<keyword id="KW-0378">Hydrolase</keyword>
<keyword id="KW-0413">Isomerase</keyword>
<keyword id="KW-0547">Nucleotide-binding</keyword>
<keyword id="KW-1185">Reference proteome</keyword>
<keyword id="KW-0677">Repeat</keyword>
<comment type="function">
    <text evidence="5">Catalyzes DNA unwinding and is involved in telomerase-independent telomere maintenance.</text>
</comment>
<comment type="induction">
    <text evidence="5">Induced in absence of telomerase TLC1.</text>
</comment>
<comment type="similarity">
    <text evidence="4">Belongs to the helicase family. Yeast subtelomeric Y' repeat subfamily.</text>
</comment>
<organism>
    <name type="scientific">Saccharomyces cerevisiae (strain ATCC 204508 / S288c)</name>
    <name type="common">Baker's yeast</name>
    <dbReference type="NCBI Taxonomy" id="559292"/>
    <lineage>
        <taxon>Eukaryota</taxon>
        <taxon>Fungi</taxon>
        <taxon>Dikarya</taxon>
        <taxon>Ascomycota</taxon>
        <taxon>Saccharomycotina</taxon>
        <taxon>Saccharomycetes</taxon>
        <taxon>Saccharomycetales</taxon>
        <taxon>Saccharomycetaceae</taxon>
        <taxon>Saccharomyces</taxon>
    </lineage>
</organism>
<accession>P40105</accession>
<accession>D3DM99</accession>
<sequence>MVYTLFQVHTLKFNRKDYDTLSLFYLNRGYYNELSFRVLERCHEKASARPNDSSTMRTFTDFVSGAPIVRSLQKSTIRKYGYNLAPYMFLLLHVDELSIFSAYQASLPGEKKVDTERLKRDLCPRKPTEIKYFSQICNDMMNKKDRLGDILHIILRACALNFGAGPRGGAGDEEDRSITNEEPIIPSVDEHGLKVCKLRSPNTPRRLRKTLDAVKALLVSSCACTARDLDIFDDNNGVAMWKWIKILYHEVAQETALKDSYRITLVPSSDGVSVCGKLFNREYVRGFYFACKAQFDNLWEELNDCFYMPTVVDIASLILRNREVLFREPKRGIDEYLENDSFLQMIPVKYREIVLPKLRRDTNKMTAALKNKVTVAIDELTVPLMWMIHFAVGYPYRYPELQLLAFAGPQRNVYVDDTTRRIQLYTDYNKNGSSEPRLKTLDGLTSDYVFYFVTVLRQMQICALGNSYDAFNHDPWMDVVGFEDPDQVTNRDISRIVLYSYMFLNTAKGCLVEYATFRQYMRELPKNAPQKLNFREMRQGLIALGRHCVGSRFETDLYESATSELMANHSVQTGRNIYGVDSFSLTSVSGTTATLLQERASERWIQWLGLESDYHCSFSSTRNAEDVVAGEAASSDHHQKISRVTRKRPREPKSTNDILVAGQKLFGSSFEFRDLHQLRLCHEIYMADTPSVAVQAPPGYGKTELFHLPLIALASKGDVKYVSFLFVPYTVLLANCMIRLSRCGCLNVAPVRNFIEEGCDGVTDLYVGIYDDLASTNFTDRIAAWENIVECTFRTNNVKLGYLIVDEFHNFETEVYRQSQFGGITNLDFDAFEKAIFLSGTAPEAVADAALQRIGLTGLAKKSMDINELKRSEDLSRGLSSYPTRMFNLIKEKSEVPLGHVHKIWKKVESQPEEALKLLLALFEIEPESKAIVVASTTNEVEELACSWRKYFRVVWIHGKLGAAEKVSRTKEFVTDGSMRVLIGTKLVTEGIDIKQLMMVIMLDNRLNIIELIQGVGRLRDGGLCYLLSRKNSWAARNRKGELPPIKEGCITEQVREFYGLESKKGKKGQHVGCCGSRTDLSADTVELIERMDRLAEKQATASMSIVALPSSFQESNSSDRCRKYCSSDEDSDTCIHGSANASTNATTNSSTNATTTASTNVRTSATTTASINVRTSATTTESTNSSTNATTTASTNVRTSATTTASINVRTSATTTESTNSNTSATTTESTDSNTSATTTESTDSNTSATTTASTNSSTNATTTASTNSSTNATTTESTNASAKEDANKDGNAEDNRFHPVTDINKESYKRKGSQMVLLERKKLKAQFPNTSENMNVLQFLGFRSDEIKHLFLYGIDVYFCPEGVFTQYGLCKGCQKMFELCVCWAGQKVSYRRMAWEALAVERMLRNDEEYKEYLEDIEPYHGDPVGYLKYFSVKRGEIYSQIQRNYAWYLAITRRRETISVLDSTRGKQGSQVFRMSGRQIKELYYKVWSNLRESKTEVLQYFLNWDEKKCREEWEAKDDTVFVEALEKVGVFQRLRSMTSAGLQGPQYVKLQFSRHHRQLRSRYELSLGMHLRDQLALGVTPSKVPHWTAFLSMLIGLFCNKTFRQKLEYLLEQISEVWLLPHWLDLANVEVLAADNTRVPLYMLMVAVHKELDSDDVPDGRFDILLCRDSSREVGE</sequence>
<reference key="1">
    <citation type="journal article" date="1997" name="Nature">
        <title>The nucleotide sequence of Saccharomyces cerevisiae chromosome V.</title>
        <authorList>
            <person name="Dietrich F.S."/>
            <person name="Mulligan J.T."/>
            <person name="Hennessy K.M."/>
            <person name="Yelton M.A."/>
            <person name="Allen E."/>
            <person name="Araujo R."/>
            <person name="Aviles E."/>
            <person name="Berno A."/>
            <person name="Brennan T."/>
            <person name="Carpenter J."/>
            <person name="Chen E."/>
            <person name="Cherry J.M."/>
            <person name="Chung E."/>
            <person name="Duncan M."/>
            <person name="Guzman E."/>
            <person name="Hartzell G."/>
            <person name="Hunicke-Smith S."/>
            <person name="Hyman R.W."/>
            <person name="Kayser A."/>
            <person name="Komp C."/>
            <person name="Lashkari D."/>
            <person name="Lew H."/>
            <person name="Lin D."/>
            <person name="Mosedale D."/>
            <person name="Nakahara K."/>
            <person name="Namath A."/>
            <person name="Norgren R."/>
            <person name="Oefner P."/>
            <person name="Oh C."/>
            <person name="Petel F.X."/>
            <person name="Roberts D."/>
            <person name="Sehl P."/>
            <person name="Schramm S."/>
            <person name="Shogren T."/>
            <person name="Smith V."/>
            <person name="Taylor P."/>
            <person name="Wei Y."/>
            <person name="Botstein D."/>
            <person name="Davis R.W."/>
        </authorList>
    </citation>
    <scope>NUCLEOTIDE SEQUENCE [LARGE SCALE GENOMIC DNA]</scope>
    <source>
        <strain>ATCC 204508 / S288c</strain>
    </source>
</reference>
<reference key="2">
    <citation type="journal article" date="2014" name="G3 (Bethesda)">
        <title>The reference genome sequence of Saccharomyces cerevisiae: Then and now.</title>
        <authorList>
            <person name="Engel S.R."/>
            <person name="Dietrich F.S."/>
            <person name="Fisk D.G."/>
            <person name="Binkley G."/>
            <person name="Balakrishnan R."/>
            <person name="Costanzo M.C."/>
            <person name="Dwight S.S."/>
            <person name="Hitz B.C."/>
            <person name="Karra K."/>
            <person name="Nash R.S."/>
            <person name="Weng S."/>
            <person name="Wong E.D."/>
            <person name="Lloyd P."/>
            <person name="Skrzypek M.S."/>
            <person name="Miyasato S.R."/>
            <person name="Simison M."/>
            <person name="Cherry J.M."/>
        </authorList>
    </citation>
    <scope>GENOME REANNOTATION</scope>
    <source>
        <strain>ATCC 204508 / S288c</strain>
    </source>
</reference>
<reference key="3">
    <citation type="journal article" date="1998" name="J. Biol. Chem.">
        <title>Y'-Help1, a DNA helicase encoded by the yeast subtelomeric Y' element, is induced in survivors defective for telomerase.</title>
        <authorList>
            <person name="Yamada M."/>
            <person name="Hayatsu N."/>
            <person name="Matsuura A."/>
            <person name="Ishikawa F."/>
        </authorList>
    </citation>
    <scope>FUNCTION</scope>
    <scope>INDUCTION</scope>
</reference>